<comment type="function">
    <text evidence="2 3">Alcohol dehydrogenase (By similarity). Catalyzes the NAD-dependent oxidation of primary alcohols to the corresponding aldehydes (By similarity). Oxidizes secondary alcohols to the corresponding ketones (By similarity).</text>
</comment>
<comment type="catalytic activity">
    <reaction evidence="3">
        <text>a primary alcohol + NAD(+) = an aldehyde + NADH + H(+)</text>
        <dbReference type="Rhea" id="RHEA:10736"/>
        <dbReference type="ChEBI" id="CHEBI:15378"/>
        <dbReference type="ChEBI" id="CHEBI:15734"/>
        <dbReference type="ChEBI" id="CHEBI:17478"/>
        <dbReference type="ChEBI" id="CHEBI:57540"/>
        <dbReference type="ChEBI" id="CHEBI:57945"/>
        <dbReference type="EC" id="1.1.1.1"/>
    </reaction>
</comment>
<comment type="catalytic activity">
    <reaction evidence="2">
        <text>a secondary alcohol + NAD(+) = a ketone + NADH + H(+)</text>
        <dbReference type="Rhea" id="RHEA:10740"/>
        <dbReference type="ChEBI" id="CHEBI:15378"/>
        <dbReference type="ChEBI" id="CHEBI:17087"/>
        <dbReference type="ChEBI" id="CHEBI:35681"/>
        <dbReference type="ChEBI" id="CHEBI:57540"/>
        <dbReference type="ChEBI" id="CHEBI:57945"/>
        <dbReference type="EC" id="1.1.1.1"/>
    </reaction>
</comment>
<comment type="cofactor">
    <cofactor evidence="2">
        <name>Zn(2+)</name>
        <dbReference type="ChEBI" id="CHEBI:29105"/>
    </cofactor>
    <text evidence="2">Binds 2 Zn(2+) ions per subunit.</text>
</comment>
<comment type="subunit">
    <text evidence="4">Dimer.</text>
</comment>
<comment type="subcellular location">
    <subcellularLocation>
        <location evidence="1">Cytoplasm</location>
    </subcellularLocation>
</comment>
<comment type="similarity">
    <text evidence="5">Belongs to the zinc-containing alcohol dehydrogenase family. Class-V subfamily.</text>
</comment>
<reference key="1">
    <citation type="submission" date="2004-11" db="EMBL/GenBank/DDBJ databases">
        <authorList>
            <consortium name="The German cDNA consortium"/>
        </authorList>
    </citation>
    <scope>NUCLEOTIDE SEQUENCE [LARGE SCALE MRNA]</scope>
    <source>
        <tissue>Kidney</tissue>
    </source>
</reference>
<protein>
    <recommendedName>
        <fullName>Alcohol dehydrogenase 6</fullName>
        <ecNumber evidence="3">1.1.1.1</ecNumber>
    </recommendedName>
</protein>
<keyword id="KW-0963">Cytoplasm</keyword>
<keyword id="KW-0479">Metal-binding</keyword>
<keyword id="KW-0520">NAD</keyword>
<keyword id="KW-0560">Oxidoreductase</keyword>
<keyword id="KW-0597">Phosphoprotein</keyword>
<keyword id="KW-1185">Reference proteome</keyword>
<keyword id="KW-0862">Zinc</keyword>
<accession>Q5R7Z8</accession>
<proteinExistence type="evidence at transcript level"/>
<feature type="chain" id="PRO_0000160688" description="Alcohol dehydrogenase 6">
    <location>
        <begin position="1"/>
        <end position="375"/>
    </location>
</feature>
<feature type="binding site" evidence="2">
    <location>
        <position position="47"/>
    </location>
    <ligand>
        <name>Zn(2+)</name>
        <dbReference type="ChEBI" id="CHEBI:29105"/>
        <label>1</label>
        <note>catalytic</note>
    </ligand>
</feature>
<feature type="binding site" evidence="2">
    <location>
        <position position="69"/>
    </location>
    <ligand>
        <name>Zn(2+)</name>
        <dbReference type="ChEBI" id="CHEBI:29105"/>
        <label>1</label>
        <note>catalytic</note>
    </ligand>
</feature>
<feature type="binding site" evidence="2">
    <location>
        <position position="99"/>
    </location>
    <ligand>
        <name>Zn(2+)</name>
        <dbReference type="ChEBI" id="CHEBI:29105"/>
        <label>2</label>
    </ligand>
</feature>
<feature type="binding site" evidence="2">
    <location>
        <position position="102"/>
    </location>
    <ligand>
        <name>Zn(2+)</name>
        <dbReference type="ChEBI" id="CHEBI:29105"/>
        <label>2</label>
    </ligand>
</feature>
<feature type="binding site" evidence="2">
    <location>
        <position position="105"/>
    </location>
    <ligand>
        <name>Zn(2+)</name>
        <dbReference type="ChEBI" id="CHEBI:29105"/>
        <label>2</label>
    </ligand>
</feature>
<feature type="binding site" evidence="2">
    <location>
        <position position="113"/>
    </location>
    <ligand>
        <name>Zn(2+)</name>
        <dbReference type="ChEBI" id="CHEBI:29105"/>
        <label>2</label>
    </ligand>
</feature>
<feature type="binding site" evidence="2">
    <location>
        <position position="175"/>
    </location>
    <ligand>
        <name>Zn(2+)</name>
        <dbReference type="ChEBI" id="CHEBI:29105"/>
        <label>1</label>
        <note>catalytic</note>
    </ligand>
</feature>
<feature type="binding site" evidence="2">
    <location>
        <begin position="200"/>
        <end position="205"/>
    </location>
    <ligand>
        <name>NAD(+)</name>
        <dbReference type="ChEBI" id="CHEBI:57540"/>
    </ligand>
</feature>
<feature type="binding site" evidence="2">
    <location>
        <position position="224"/>
    </location>
    <ligand>
        <name>NAD(+)</name>
        <dbReference type="ChEBI" id="CHEBI:57540"/>
    </ligand>
</feature>
<feature type="binding site" evidence="2">
    <location>
        <position position="229"/>
    </location>
    <ligand>
        <name>NAD(+)</name>
        <dbReference type="ChEBI" id="CHEBI:57540"/>
    </ligand>
</feature>
<feature type="binding site" evidence="2">
    <location>
        <begin position="293"/>
        <end position="295"/>
    </location>
    <ligand>
        <name>NAD(+)</name>
        <dbReference type="ChEBI" id="CHEBI:57540"/>
    </ligand>
</feature>
<feature type="binding site" evidence="2">
    <location>
        <position position="370"/>
    </location>
    <ligand>
        <name>NAD(+)</name>
        <dbReference type="ChEBI" id="CHEBI:57540"/>
    </ligand>
</feature>
<feature type="modified residue" description="Phosphoserine" evidence="3">
    <location>
        <position position="23"/>
    </location>
</feature>
<organism>
    <name type="scientific">Pongo abelii</name>
    <name type="common">Sumatran orangutan</name>
    <name type="synonym">Pongo pygmaeus abelii</name>
    <dbReference type="NCBI Taxonomy" id="9601"/>
    <lineage>
        <taxon>Eukaryota</taxon>
        <taxon>Metazoa</taxon>
        <taxon>Chordata</taxon>
        <taxon>Craniata</taxon>
        <taxon>Vertebrata</taxon>
        <taxon>Euteleostomi</taxon>
        <taxon>Mammalia</taxon>
        <taxon>Eutheria</taxon>
        <taxon>Euarchontoglires</taxon>
        <taxon>Primates</taxon>
        <taxon>Haplorrhini</taxon>
        <taxon>Catarrhini</taxon>
        <taxon>Hominidae</taxon>
        <taxon>Pongo</taxon>
    </lineage>
</organism>
<gene>
    <name type="primary">ADH6</name>
</gene>
<evidence type="ECO:0000250" key="1"/>
<evidence type="ECO:0000250" key="2">
    <source>
        <dbReference type="UniProtKB" id="P07327"/>
    </source>
</evidence>
<evidence type="ECO:0000250" key="3">
    <source>
        <dbReference type="UniProtKB" id="P28332"/>
    </source>
</evidence>
<evidence type="ECO:0000250" key="4">
    <source>
        <dbReference type="UniProtKB" id="P41681"/>
    </source>
</evidence>
<evidence type="ECO:0000305" key="5"/>
<sequence length="375" mass="39861">MSTTGQVIRCKAAILWKPGAPFSIEEVEVAPPKAKEVRIKVVATGLCGTEMKVLGSKHLDLLYPTILGHEGAGIVESIGEGVSTVKPGDKVITLFLPQCGECTSCLNSEGNFCIQFKQSETQLMSDGTSRFTCKGKSIYHFGNTSTFCEYTVIKEISVAKIDAVAPLEKVCLISCGFSTGFGAAINTAKVTPGSTCAVFGLGGVGSSVVMGCKAAGATRIIGVDVNKEKFKKARELGATECLNPQDLKKPIQEVLFDMTDAGIDFCFEAIGNLDVLAAALASCNESYGVCVVVGLLPASVQLKISGQLFFSGRSLKGSVFGGWKSRQHIPKLVADYMAKKLNLDPLITHTLNLDKINEAVELMKTGKCIRCILLL</sequence>
<name>ADH6_PONAB</name>
<dbReference type="EC" id="1.1.1.1" evidence="3"/>
<dbReference type="EMBL" id="CR859958">
    <property type="protein sequence ID" value="CAH92112.1"/>
    <property type="molecule type" value="mRNA"/>
</dbReference>
<dbReference type="RefSeq" id="NP_001126233.1">
    <property type="nucleotide sequence ID" value="NM_001132761.2"/>
</dbReference>
<dbReference type="SMR" id="Q5R7Z8"/>
<dbReference type="FunCoup" id="Q5R7Z8">
    <property type="interactions" value="235"/>
</dbReference>
<dbReference type="STRING" id="9601.ENSPPYP00000016690"/>
<dbReference type="GeneID" id="100173203"/>
<dbReference type="KEGG" id="pon:100173203"/>
<dbReference type="CTD" id="130"/>
<dbReference type="eggNOG" id="KOG0022">
    <property type="taxonomic scope" value="Eukaryota"/>
</dbReference>
<dbReference type="InParanoid" id="Q5R7Z8"/>
<dbReference type="OrthoDB" id="417550at2759"/>
<dbReference type="Proteomes" id="UP000001595">
    <property type="component" value="Unplaced"/>
</dbReference>
<dbReference type="GO" id="GO:0005829">
    <property type="term" value="C:cytosol"/>
    <property type="evidence" value="ECO:0007669"/>
    <property type="project" value="TreeGrafter"/>
</dbReference>
<dbReference type="GO" id="GO:0004745">
    <property type="term" value="F:all-trans-retinol dehydrogenase (NAD+) activity"/>
    <property type="evidence" value="ECO:0007669"/>
    <property type="project" value="TreeGrafter"/>
</dbReference>
<dbReference type="GO" id="GO:0008270">
    <property type="term" value="F:zinc ion binding"/>
    <property type="evidence" value="ECO:0007669"/>
    <property type="project" value="InterPro"/>
</dbReference>
<dbReference type="GO" id="GO:0042573">
    <property type="term" value="P:retinoic acid metabolic process"/>
    <property type="evidence" value="ECO:0007669"/>
    <property type="project" value="TreeGrafter"/>
</dbReference>
<dbReference type="GO" id="GO:0042572">
    <property type="term" value="P:retinol metabolic process"/>
    <property type="evidence" value="ECO:0007669"/>
    <property type="project" value="TreeGrafter"/>
</dbReference>
<dbReference type="CDD" id="cd08299">
    <property type="entry name" value="alcohol_DH_class_I_II_IV"/>
    <property type="match status" value="1"/>
</dbReference>
<dbReference type="FunFam" id="3.90.180.10:FF:000007">
    <property type="entry name" value="Alcohol dehydrogenase 6"/>
    <property type="match status" value="1"/>
</dbReference>
<dbReference type="FunFam" id="3.40.50.720:FF:000003">
    <property type="entry name" value="S-(hydroxymethyl)glutathione dehydrogenase"/>
    <property type="match status" value="1"/>
</dbReference>
<dbReference type="Gene3D" id="3.90.180.10">
    <property type="entry name" value="Medium-chain alcohol dehydrogenases, catalytic domain"/>
    <property type="match status" value="1"/>
</dbReference>
<dbReference type="Gene3D" id="3.40.50.720">
    <property type="entry name" value="NAD(P)-binding Rossmann-like Domain"/>
    <property type="match status" value="1"/>
</dbReference>
<dbReference type="InterPro" id="IPR013149">
    <property type="entry name" value="ADH-like_C"/>
</dbReference>
<dbReference type="InterPro" id="IPR013154">
    <property type="entry name" value="ADH-like_N"/>
</dbReference>
<dbReference type="InterPro" id="IPR002328">
    <property type="entry name" value="ADH_Zn_CS"/>
</dbReference>
<dbReference type="InterPro" id="IPR011032">
    <property type="entry name" value="GroES-like_sf"/>
</dbReference>
<dbReference type="InterPro" id="IPR036291">
    <property type="entry name" value="NAD(P)-bd_dom_sf"/>
</dbReference>
<dbReference type="InterPro" id="IPR020843">
    <property type="entry name" value="PKS_ER"/>
</dbReference>
<dbReference type="PANTHER" id="PTHR43880">
    <property type="entry name" value="ALCOHOL DEHYDROGENASE"/>
    <property type="match status" value="1"/>
</dbReference>
<dbReference type="PANTHER" id="PTHR43880:SF20">
    <property type="entry name" value="ALCOHOL DEHYDROGENASE 6"/>
    <property type="match status" value="1"/>
</dbReference>
<dbReference type="Pfam" id="PF08240">
    <property type="entry name" value="ADH_N"/>
    <property type="match status" value="1"/>
</dbReference>
<dbReference type="Pfam" id="PF00107">
    <property type="entry name" value="ADH_zinc_N"/>
    <property type="match status" value="1"/>
</dbReference>
<dbReference type="SMART" id="SM00829">
    <property type="entry name" value="PKS_ER"/>
    <property type="match status" value="1"/>
</dbReference>
<dbReference type="SUPFAM" id="SSF50129">
    <property type="entry name" value="GroES-like"/>
    <property type="match status" value="2"/>
</dbReference>
<dbReference type="SUPFAM" id="SSF51735">
    <property type="entry name" value="NAD(P)-binding Rossmann-fold domains"/>
    <property type="match status" value="1"/>
</dbReference>
<dbReference type="PROSITE" id="PS00059">
    <property type="entry name" value="ADH_ZINC"/>
    <property type="match status" value="1"/>
</dbReference>